<protein>
    <recommendedName>
        <fullName evidence="1">K(+)/H(+) antiporter NhaP2</fullName>
    </recommendedName>
    <alternativeName>
        <fullName evidence="1">Potassium/proton antiporter NhaP2</fullName>
    </alternativeName>
</protein>
<gene>
    <name evidence="1" type="primary">nhaP2</name>
    <name type="synonym">cvrA</name>
    <name type="ordered locus">ECIAI39_1522</name>
</gene>
<accession>B7NUV2</accession>
<comment type="function">
    <text evidence="1">K(+)/H(+) antiporter that extrudes potassium in exchange for external protons and maintains the internal concentration of potassium under toxic levels.</text>
</comment>
<comment type="catalytic activity">
    <reaction evidence="1">
        <text>K(+)(in) + H(+)(out) = K(+)(out) + H(+)(in)</text>
        <dbReference type="Rhea" id="RHEA:29467"/>
        <dbReference type="ChEBI" id="CHEBI:15378"/>
        <dbReference type="ChEBI" id="CHEBI:29103"/>
    </reaction>
    <physiologicalReaction direction="left-to-right" evidence="1">
        <dbReference type="Rhea" id="RHEA:29468"/>
    </physiologicalReaction>
</comment>
<comment type="subcellular location">
    <subcellularLocation>
        <location evidence="1">Cell inner membrane</location>
        <topology evidence="1">Multi-pass membrane protein</topology>
    </subcellularLocation>
</comment>
<comment type="similarity">
    <text evidence="1">Belongs to the monovalent cation:proton antiporter 1 (CPA1) transporter (TC 2.A.36) family. NhaP2 subfamily.</text>
</comment>
<keyword id="KW-0050">Antiport</keyword>
<keyword id="KW-0997">Cell inner membrane</keyword>
<keyword id="KW-1003">Cell membrane</keyword>
<keyword id="KW-0406">Ion transport</keyword>
<keyword id="KW-0472">Membrane</keyword>
<keyword id="KW-0630">Potassium</keyword>
<keyword id="KW-0633">Potassium transport</keyword>
<keyword id="KW-0812">Transmembrane</keyword>
<keyword id="KW-1133">Transmembrane helix</keyword>
<keyword id="KW-0813">Transport</keyword>
<feature type="chain" id="PRO_1000136701" description="K(+)/H(+) antiporter NhaP2">
    <location>
        <begin position="1"/>
        <end position="578"/>
    </location>
</feature>
<feature type="transmembrane region" description="Helical" evidence="1">
    <location>
        <begin position="6"/>
        <end position="26"/>
    </location>
</feature>
<feature type="transmembrane region" description="Helical" evidence="1">
    <location>
        <begin position="30"/>
        <end position="50"/>
    </location>
</feature>
<feature type="transmembrane region" description="Helical" evidence="1">
    <location>
        <begin position="58"/>
        <end position="78"/>
    </location>
</feature>
<feature type="transmembrane region" description="Helical" evidence="1">
    <location>
        <begin position="87"/>
        <end position="107"/>
    </location>
</feature>
<feature type="transmembrane region" description="Helical" evidence="1">
    <location>
        <begin position="109"/>
        <end position="129"/>
    </location>
</feature>
<feature type="transmembrane region" description="Helical" evidence="1">
    <location>
        <begin position="156"/>
        <end position="176"/>
    </location>
</feature>
<feature type="transmembrane region" description="Helical" evidence="1">
    <location>
        <begin position="185"/>
        <end position="205"/>
    </location>
</feature>
<feature type="transmembrane region" description="Helical" evidence="1">
    <location>
        <begin position="216"/>
        <end position="236"/>
    </location>
</feature>
<feature type="transmembrane region" description="Helical" evidence="1">
    <location>
        <begin position="237"/>
        <end position="257"/>
    </location>
</feature>
<feature type="transmembrane region" description="Helical" evidence="1">
    <location>
        <begin position="270"/>
        <end position="290"/>
    </location>
</feature>
<feature type="transmembrane region" description="Helical" evidence="1">
    <location>
        <begin position="293"/>
        <end position="313"/>
    </location>
</feature>
<feature type="transmembrane region" description="Helical" evidence="1">
    <location>
        <begin position="334"/>
        <end position="354"/>
    </location>
</feature>
<feature type="transmembrane region" description="Helical" evidence="1">
    <location>
        <begin position="363"/>
        <end position="383"/>
    </location>
</feature>
<feature type="domain" description="RCK C-terminal" evidence="1">
    <location>
        <begin position="403"/>
        <end position="485"/>
    </location>
</feature>
<sequence>MDATTIISLFILGSILVTSSILLSSFSSRLGIPILVIFLAIGMLAGVDGVGGIPFDNYPFAYMVSNLALAIILLDGGMRTQASSFRVALGPALSLATLGVLITSGLTGMMAAWLFNLDLIEGLLIGAIVGSTDAAAVFSLLGGKGLNERVGSTLEIESGSNDPMAVFLTITLIAMIQQHESSVSWMFVVDILQQFGLGIVIGLGGGYLLLQMINRIALPAGLYPLLALSGGILIFALTTALEGSGILAVYLCGFLLGNRPIRNRYGILQNFDGLAWLAQIAMFLVLGLLVNPSDLLPIAIPALILSAWMIFFARPLSVFAGLLPFRGFNLRERVFISWVGLRGAVPIILAVFPMMAGLENARLFFNVAFFVVLVSLLLQGTSLSWAAKKAKVVVPPVGRPVSRVGLDIHPENPWEQFVYQLSADKWCVGAALRDLHMPKETRIAALFRDNQLLHPTGSTRLREGDVLCVIGRERDLPALGKLFSQSPPVALDQRFFGDFILEASAKYADVALIYGLEDGREYRDKQQTLGEIVQQLLGAAPVVGDQVEFAGMIWTVAEKEDNEVLKIGVRVAEEEAES</sequence>
<organism>
    <name type="scientific">Escherichia coli O7:K1 (strain IAI39 / ExPEC)</name>
    <dbReference type="NCBI Taxonomy" id="585057"/>
    <lineage>
        <taxon>Bacteria</taxon>
        <taxon>Pseudomonadati</taxon>
        <taxon>Pseudomonadota</taxon>
        <taxon>Gammaproteobacteria</taxon>
        <taxon>Enterobacterales</taxon>
        <taxon>Enterobacteriaceae</taxon>
        <taxon>Escherichia</taxon>
    </lineage>
</organism>
<evidence type="ECO:0000255" key="1">
    <source>
        <dbReference type="HAMAP-Rule" id="MF_01075"/>
    </source>
</evidence>
<name>NHAP2_ECO7I</name>
<reference key="1">
    <citation type="journal article" date="2009" name="PLoS Genet.">
        <title>Organised genome dynamics in the Escherichia coli species results in highly diverse adaptive paths.</title>
        <authorList>
            <person name="Touchon M."/>
            <person name="Hoede C."/>
            <person name="Tenaillon O."/>
            <person name="Barbe V."/>
            <person name="Baeriswyl S."/>
            <person name="Bidet P."/>
            <person name="Bingen E."/>
            <person name="Bonacorsi S."/>
            <person name="Bouchier C."/>
            <person name="Bouvet O."/>
            <person name="Calteau A."/>
            <person name="Chiapello H."/>
            <person name="Clermont O."/>
            <person name="Cruveiller S."/>
            <person name="Danchin A."/>
            <person name="Diard M."/>
            <person name="Dossat C."/>
            <person name="Karoui M.E."/>
            <person name="Frapy E."/>
            <person name="Garry L."/>
            <person name="Ghigo J.M."/>
            <person name="Gilles A.M."/>
            <person name="Johnson J."/>
            <person name="Le Bouguenec C."/>
            <person name="Lescat M."/>
            <person name="Mangenot S."/>
            <person name="Martinez-Jehanne V."/>
            <person name="Matic I."/>
            <person name="Nassif X."/>
            <person name="Oztas S."/>
            <person name="Petit M.A."/>
            <person name="Pichon C."/>
            <person name="Rouy Z."/>
            <person name="Ruf C.S."/>
            <person name="Schneider D."/>
            <person name="Tourret J."/>
            <person name="Vacherie B."/>
            <person name="Vallenet D."/>
            <person name="Medigue C."/>
            <person name="Rocha E.P.C."/>
            <person name="Denamur E."/>
        </authorList>
    </citation>
    <scope>NUCLEOTIDE SEQUENCE [LARGE SCALE GENOMIC DNA]</scope>
    <source>
        <strain>IAI39 / ExPEC</strain>
    </source>
</reference>
<dbReference type="EMBL" id="CU928164">
    <property type="protein sequence ID" value="CAR17654.1"/>
    <property type="molecule type" value="Genomic_DNA"/>
</dbReference>
<dbReference type="RefSeq" id="WP_000340206.1">
    <property type="nucleotide sequence ID" value="NC_011750.1"/>
</dbReference>
<dbReference type="RefSeq" id="YP_002407522.1">
    <property type="nucleotide sequence ID" value="NC_011750.1"/>
</dbReference>
<dbReference type="SMR" id="B7NUV2"/>
<dbReference type="STRING" id="585057.ECIAI39_1522"/>
<dbReference type="KEGG" id="ect:ECIAI39_1522"/>
<dbReference type="PATRIC" id="fig|585057.6.peg.1591"/>
<dbReference type="HOGENOM" id="CLU_005912_9_2_6"/>
<dbReference type="Proteomes" id="UP000000749">
    <property type="component" value="Chromosome"/>
</dbReference>
<dbReference type="GO" id="GO:0005886">
    <property type="term" value="C:plasma membrane"/>
    <property type="evidence" value="ECO:0007669"/>
    <property type="project" value="UniProtKB-SubCell"/>
</dbReference>
<dbReference type="GO" id="GO:0050660">
    <property type="term" value="F:flavin adenine dinucleotide binding"/>
    <property type="evidence" value="ECO:0007669"/>
    <property type="project" value="InterPro"/>
</dbReference>
<dbReference type="GO" id="GO:0015386">
    <property type="term" value="F:potassium:proton antiporter activity"/>
    <property type="evidence" value="ECO:0007669"/>
    <property type="project" value="UniProtKB-UniRule"/>
</dbReference>
<dbReference type="GO" id="GO:0006884">
    <property type="term" value="P:cell volume homeostasis"/>
    <property type="evidence" value="ECO:0007669"/>
    <property type="project" value="InterPro"/>
</dbReference>
<dbReference type="FunFam" id="1.20.1530.20:FF:000002">
    <property type="entry name" value="K(+)/H(+) antiporter NhaP2"/>
    <property type="match status" value="1"/>
</dbReference>
<dbReference type="FunFam" id="3.30.465.10:FF:000009">
    <property type="entry name" value="K(+)/H(+) antiporter NhaP2"/>
    <property type="match status" value="1"/>
</dbReference>
<dbReference type="FunFam" id="3.30.70.1450:FF:000007">
    <property type="entry name" value="K(+)/H(+) antiporter NhaP2"/>
    <property type="match status" value="1"/>
</dbReference>
<dbReference type="Gene3D" id="1.20.1530.20">
    <property type="match status" value="1"/>
</dbReference>
<dbReference type="Gene3D" id="3.30.465.10">
    <property type="match status" value="1"/>
</dbReference>
<dbReference type="Gene3D" id="3.30.70.1450">
    <property type="entry name" value="Regulator of K+ conductance, C-terminal domain"/>
    <property type="match status" value="1"/>
</dbReference>
<dbReference type="HAMAP" id="MF_01075">
    <property type="entry name" value="NhaP2"/>
    <property type="match status" value="1"/>
</dbReference>
<dbReference type="InterPro" id="IPR006153">
    <property type="entry name" value="Cation/H_exchanger_TM"/>
</dbReference>
<dbReference type="InterPro" id="IPR036318">
    <property type="entry name" value="FAD-bd_PCMH-like_sf"/>
</dbReference>
<dbReference type="InterPro" id="IPR016169">
    <property type="entry name" value="FAD-bd_PCMH_sub2"/>
</dbReference>
<dbReference type="InterPro" id="IPR038770">
    <property type="entry name" value="Na+/solute_symporter_sf"/>
</dbReference>
<dbReference type="InterPro" id="IPR023729">
    <property type="entry name" value="NhaP2"/>
</dbReference>
<dbReference type="InterPro" id="IPR006037">
    <property type="entry name" value="RCK_C"/>
</dbReference>
<dbReference type="InterPro" id="IPR036721">
    <property type="entry name" value="RCK_C_sf"/>
</dbReference>
<dbReference type="InterPro" id="IPR005170">
    <property type="entry name" value="Transptr-assoc_dom"/>
</dbReference>
<dbReference type="NCBIfam" id="NF003714">
    <property type="entry name" value="PRK05326.1-1"/>
    <property type="match status" value="1"/>
</dbReference>
<dbReference type="NCBIfam" id="NF003715">
    <property type="entry name" value="PRK05326.1-2"/>
    <property type="match status" value="1"/>
</dbReference>
<dbReference type="NCBIfam" id="NF003716">
    <property type="entry name" value="PRK05326.1-3"/>
    <property type="match status" value="1"/>
</dbReference>
<dbReference type="PANTHER" id="PTHR32507:SF7">
    <property type="entry name" value="K(+)_H(+) ANTIPORTER NHAP2"/>
    <property type="match status" value="1"/>
</dbReference>
<dbReference type="PANTHER" id="PTHR32507">
    <property type="entry name" value="NA(+)/H(+) ANTIPORTER 1"/>
    <property type="match status" value="1"/>
</dbReference>
<dbReference type="Pfam" id="PF03471">
    <property type="entry name" value="CorC_HlyC"/>
    <property type="match status" value="1"/>
</dbReference>
<dbReference type="Pfam" id="PF00999">
    <property type="entry name" value="Na_H_Exchanger"/>
    <property type="match status" value="1"/>
</dbReference>
<dbReference type="Pfam" id="PF02080">
    <property type="entry name" value="TrkA_C"/>
    <property type="match status" value="1"/>
</dbReference>
<dbReference type="SMART" id="SM01091">
    <property type="entry name" value="CorC_HlyC"/>
    <property type="match status" value="1"/>
</dbReference>
<dbReference type="SUPFAM" id="SSF56176">
    <property type="entry name" value="FAD-binding/transporter-associated domain-like"/>
    <property type="match status" value="1"/>
</dbReference>
<dbReference type="SUPFAM" id="SSF116726">
    <property type="entry name" value="TrkA C-terminal domain-like"/>
    <property type="match status" value="1"/>
</dbReference>
<dbReference type="PROSITE" id="PS51202">
    <property type="entry name" value="RCK_C"/>
    <property type="match status" value="1"/>
</dbReference>
<proteinExistence type="inferred from homology"/>